<comment type="function">
    <text evidence="1">Catalyzes the interconversion of L-alanine and D-alanine. May also act on other amino acids.</text>
</comment>
<comment type="catalytic activity">
    <reaction evidence="1">
        <text>L-alanine = D-alanine</text>
        <dbReference type="Rhea" id="RHEA:20249"/>
        <dbReference type="ChEBI" id="CHEBI:57416"/>
        <dbReference type="ChEBI" id="CHEBI:57972"/>
        <dbReference type="EC" id="5.1.1.1"/>
    </reaction>
</comment>
<comment type="cofactor">
    <cofactor evidence="1">
        <name>pyridoxal 5'-phosphate</name>
        <dbReference type="ChEBI" id="CHEBI:597326"/>
    </cofactor>
</comment>
<comment type="pathway">
    <text evidence="1">Amino-acid biosynthesis; D-alanine biosynthesis; D-alanine from L-alanine: step 1/1.</text>
</comment>
<comment type="similarity">
    <text evidence="1">Belongs to the alanine racemase family.</text>
</comment>
<proteinExistence type="inferred from homology"/>
<sequence length="353" mass="37526">MRGTRVEIRLAALRNNALRAAELAGDAQVFAMVKANGYGHGLLLAAETMLDSVSGLGVAVLDEARTLREHGIALPILVAEGFFDAEELEAAARLSLEVVVHSLWQVELLLANPCPVRIWLKVNAGMNRLGLRPNEALSAAARLSQAGNAPVGVMSHFACADMDEDIHSEKQLLLAGSVAEQLQLPLSASNSAALLRYPRAHAQRVRPGIMLYGSSPFNWQTAAELGLQVSHRFSARLIAINAVEAGESVGYGATWTASDPRQIGVVAVGYGDGYPRHAPSGTPVAVNGVVTTLVGRVSMDMITIDVTGLSASVGDEVELWGDVVDVDDVARACGTISYELFCQITQRPERTIV</sequence>
<keyword id="KW-0413">Isomerase</keyword>
<keyword id="KW-0663">Pyridoxal phosphate</keyword>
<keyword id="KW-1185">Reference proteome</keyword>
<dbReference type="EC" id="5.1.1.1" evidence="1"/>
<dbReference type="EMBL" id="AM286690">
    <property type="protein sequence ID" value="CAL17634.1"/>
    <property type="molecule type" value="Genomic_DNA"/>
</dbReference>
<dbReference type="RefSeq" id="WP_011589464.1">
    <property type="nucleotide sequence ID" value="NC_008260.1"/>
</dbReference>
<dbReference type="SMR" id="Q0VMG4"/>
<dbReference type="STRING" id="393595.ABO_2186"/>
<dbReference type="KEGG" id="abo:ABO_2186"/>
<dbReference type="eggNOG" id="COG0787">
    <property type="taxonomic scope" value="Bacteria"/>
</dbReference>
<dbReference type="HOGENOM" id="CLU_028393_1_0_6"/>
<dbReference type="OrthoDB" id="9813814at2"/>
<dbReference type="UniPathway" id="UPA00042">
    <property type="reaction ID" value="UER00497"/>
</dbReference>
<dbReference type="Proteomes" id="UP000008871">
    <property type="component" value="Chromosome"/>
</dbReference>
<dbReference type="GO" id="GO:0005829">
    <property type="term" value="C:cytosol"/>
    <property type="evidence" value="ECO:0007669"/>
    <property type="project" value="TreeGrafter"/>
</dbReference>
<dbReference type="GO" id="GO:0008784">
    <property type="term" value="F:alanine racemase activity"/>
    <property type="evidence" value="ECO:0007669"/>
    <property type="project" value="UniProtKB-UniRule"/>
</dbReference>
<dbReference type="GO" id="GO:0030170">
    <property type="term" value="F:pyridoxal phosphate binding"/>
    <property type="evidence" value="ECO:0007669"/>
    <property type="project" value="UniProtKB-UniRule"/>
</dbReference>
<dbReference type="GO" id="GO:0030632">
    <property type="term" value="P:D-alanine biosynthetic process"/>
    <property type="evidence" value="ECO:0007669"/>
    <property type="project" value="UniProtKB-UniRule"/>
</dbReference>
<dbReference type="CDD" id="cd06827">
    <property type="entry name" value="PLPDE_III_AR_proteobact"/>
    <property type="match status" value="1"/>
</dbReference>
<dbReference type="FunFam" id="3.20.20.10:FF:000002">
    <property type="entry name" value="Alanine racemase"/>
    <property type="match status" value="1"/>
</dbReference>
<dbReference type="Gene3D" id="3.20.20.10">
    <property type="entry name" value="Alanine racemase"/>
    <property type="match status" value="1"/>
</dbReference>
<dbReference type="Gene3D" id="2.40.37.10">
    <property type="entry name" value="Lyase, Ornithine Decarboxylase, Chain A, domain 1"/>
    <property type="match status" value="1"/>
</dbReference>
<dbReference type="HAMAP" id="MF_01201">
    <property type="entry name" value="Ala_racemase"/>
    <property type="match status" value="1"/>
</dbReference>
<dbReference type="InterPro" id="IPR000821">
    <property type="entry name" value="Ala_racemase"/>
</dbReference>
<dbReference type="InterPro" id="IPR009006">
    <property type="entry name" value="Ala_racemase/Decarboxylase_C"/>
</dbReference>
<dbReference type="InterPro" id="IPR011079">
    <property type="entry name" value="Ala_racemase_C"/>
</dbReference>
<dbReference type="InterPro" id="IPR001608">
    <property type="entry name" value="Ala_racemase_N"/>
</dbReference>
<dbReference type="InterPro" id="IPR029066">
    <property type="entry name" value="PLP-binding_barrel"/>
</dbReference>
<dbReference type="NCBIfam" id="TIGR00492">
    <property type="entry name" value="alr"/>
    <property type="match status" value="1"/>
</dbReference>
<dbReference type="PANTHER" id="PTHR30511">
    <property type="entry name" value="ALANINE RACEMASE"/>
    <property type="match status" value="1"/>
</dbReference>
<dbReference type="PANTHER" id="PTHR30511:SF0">
    <property type="entry name" value="ALANINE RACEMASE, CATABOLIC-RELATED"/>
    <property type="match status" value="1"/>
</dbReference>
<dbReference type="Pfam" id="PF00842">
    <property type="entry name" value="Ala_racemase_C"/>
    <property type="match status" value="1"/>
</dbReference>
<dbReference type="Pfam" id="PF01168">
    <property type="entry name" value="Ala_racemase_N"/>
    <property type="match status" value="1"/>
</dbReference>
<dbReference type="PRINTS" id="PR00992">
    <property type="entry name" value="ALARACEMASE"/>
</dbReference>
<dbReference type="SMART" id="SM01005">
    <property type="entry name" value="Ala_racemase_C"/>
    <property type="match status" value="1"/>
</dbReference>
<dbReference type="SUPFAM" id="SSF50621">
    <property type="entry name" value="Alanine racemase C-terminal domain-like"/>
    <property type="match status" value="1"/>
</dbReference>
<dbReference type="SUPFAM" id="SSF51419">
    <property type="entry name" value="PLP-binding barrel"/>
    <property type="match status" value="1"/>
</dbReference>
<accession>Q0VMG4</accession>
<evidence type="ECO:0000255" key="1">
    <source>
        <dbReference type="HAMAP-Rule" id="MF_01201"/>
    </source>
</evidence>
<feature type="chain" id="PRO_1000065968" description="Alanine racemase">
    <location>
        <begin position="1"/>
        <end position="353"/>
    </location>
</feature>
<feature type="active site" description="Proton acceptor; specific for D-alanine" evidence="1">
    <location>
        <position position="34"/>
    </location>
</feature>
<feature type="active site" description="Proton acceptor; specific for L-alanine" evidence="1">
    <location>
        <position position="251"/>
    </location>
</feature>
<feature type="binding site" evidence="1">
    <location>
        <position position="128"/>
    </location>
    <ligand>
        <name>substrate</name>
    </ligand>
</feature>
<feature type="binding site" evidence="1">
    <location>
        <position position="299"/>
    </location>
    <ligand>
        <name>substrate</name>
    </ligand>
</feature>
<feature type="modified residue" description="N6-(pyridoxal phosphate)lysine" evidence="1">
    <location>
        <position position="34"/>
    </location>
</feature>
<reference key="1">
    <citation type="journal article" date="2006" name="Nat. Biotechnol.">
        <title>Genome sequence of the ubiquitous hydrocarbon-degrading marine bacterium Alcanivorax borkumensis.</title>
        <authorList>
            <person name="Schneiker S."/>
            <person name="Martins dos Santos V.A.P."/>
            <person name="Bartels D."/>
            <person name="Bekel T."/>
            <person name="Brecht M."/>
            <person name="Buhrmester J."/>
            <person name="Chernikova T.N."/>
            <person name="Denaro R."/>
            <person name="Ferrer M."/>
            <person name="Gertler C."/>
            <person name="Goesmann A."/>
            <person name="Golyshina O.V."/>
            <person name="Kaminski F."/>
            <person name="Khachane A.N."/>
            <person name="Lang S."/>
            <person name="Linke B."/>
            <person name="McHardy A.C."/>
            <person name="Meyer F."/>
            <person name="Nechitaylo T."/>
            <person name="Puehler A."/>
            <person name="Regenhardt D."/>
            <person name="Rupp O."/>
            <person name="Sabirova J.S."/>
            <person name="Selbitschka W."/>
            <person name="Yakimov M.M."/>
            <person name="Timmis K.N."/>
            <person name="Vorhoelter F.-J."/>
            <person name="Weidner S."/>
            <person name="Kaiser O."/>
            <person name="Golyshin P.N."/>
        </authorList>
    </citation>
    <scope>NUCLEOTIDE SEQUENCE [LARGE SCALE GENOMIC DNA]</scope>
    <source>
        <strain>ATCC 700651 / DSM 11573 / NCIMB 13689 / SK2</strain>
    </source>
</reference>
<name>ALR_ALCBS</name>
<organism>
    <name type="scientific">Alcanivorax borkumensis (strain ATCC 700651 / DSM 11573 / NCIMB 13689 / SK2)</name>
    <dbReference type="NCBI Taxonomy" id="393595"/>
    <lineage>
        <taxon>Bacteria</taxon>
        <taxon>Pseudomonadati</taxon>
        <taxon>Pseudomonadota</taxon>
        <taxon>Gammaproteobacteria</taxon>
        <taxon>Oceanospirillales</taxon>
        <taxon>Alcanivoracaceae</taxon>
        <taxon>Alcanivorax</taxon>
    </lineage>
</organism>
<gene>
    <name type="primary">alr</name>
    <name type="ordered locus">ABO_2186</name>
</gene>
<protein>
    <recommendedName>
        <fullName evidence="1">Alanine racemase</fullName>
        <ecNumber evidence="1">5.1.1.1</ecNumber>
    </recommendedName>
</protein>